<evidence type="ECO:0000250" key="1"/>
<evidence type="ECO:0000255" key="2">
    <source>
        <dbReference type="PROSITE-ProRule" id="PRU00094"/>
    </source>
</evidence>
<evidence type="ECO:0000255" key="3">
    <source>
        <dbReference type="PROSITE-ProRule" id="PRU00357"/>
    </source>
</evidence>
<evidence type="ECO:0000255" key="4">
    <source>
        <dbReference type="PROSITE-ProRule" id="PRU00650"/>
    </source>
</evidence>
<evidence type="ECO:0000256" key="5">
    <source>
        <dbReference type="SAM" id="MobiDB-lite"/>
    </source>
</evidence>
<evidence type="ECO:0000269" key="6">
    <source>
    </source>
</evidence>
<evidence type="ECO:0000269" key="7">
    <source>
    </source>
</evidence>
<evidence type="ECO:0000303" key="8">
    <source ref="5"/>
</evidence>
<evidence type="ECO:0000305" key="9"/>
<proteinExistence type="evidence at protein level"/>
<reference key="1">
    <citation type="journal article" date="2000" name="Biosci. Biotechnol. Biochem.">
        <title>Characterization of a novel gene encoding a putative single zinc-finger protein, ZIM, expressed during the reproductive phase in Arabidopsis thaliana.</title>
        <authorList>
            <person name="Nishii A."/>
            <person name="Takemura M."/>
            <person name="Fujita H."/>
            <person name="Shikata M."/>
            <person name="Yokota A."/>
            <person name="Kohchi T."/>
        </authorList>
    </citation>
    <scope>NUCLEOTIDE SEQUENCE [GENOMIC DNA / MRNA] (ISOFORM 1)</scope>
    <scope>SUBCELLULAR LOCATION</scope>
    <scope>TISSUE SPECIFICITY</scope>
    <source>
        <strain>cv. Columbia</strain>
        <strain>cv. Landsberg erecta</strain>
    </source>
</reference>
<reference key="2">
    <citation type="journal article" date="1999" name="Nature">
        <title>Sequence and analysis of chromosome 4 of the plant Arabidopsis thaliana.</title>
        <authorList>
            <person name="Mayer K.F.X."/>
            <person name="Schueller C."/>
            <person name="Wambutt R."/>
            <person name="Murphy G."/>
            <person name="Volckaert G."/>
            <person name="Pohl T."/>
            <person name="Duesterhoeft A."/>
            <person name="Stiekema W."/>
            <person name="Entian K.-D."/>
            <person name="Terryn N."/>
            <person name="Harris B."/>
            <person name="Ansorge W."/>
            <person name="Brandt P."/>
            <person name="Grivell L.A."/>
            <person name="Rieger M."/>
            <person name="Weichselgartner M."/>
            <person name="de Simone V."/>
            <person name="Obermaier B."/>
            <person name="Mache R."/>
            <person name="Mueller M."/>
            <person name="Kreis M."/>
            <person name="Delseny M."/>
            <person name="Puigdomenech P."/>
            <person name="Watson M."/>
            <person name="Schmidtheini T."/>
            <person name="Reichert B."/>
            <person name="Portetelle D."/>
            <person name="Perez-Alonso M."/>
            <person name="Boutry M."/>
            <person name="Bancroft I."/>
            <person name="Vos P."/>
            <person name="Hoheisel J."/>
            <person name="Zimmermann W."/>
            <person name="Wedler H."/>
            <person name="Ridley P."/>
            <person name="Langham S.-A."/>
            <person name="McCullagh B."/>
            <person name="Bilham L."/>
            <person name="Robben J."/>
            <person name="van der Schueren J."/>
            <person name="Grymonprez B."/>
            <person name="Chuang Y.-J."/>
            <person name="Vandenbussche F."/>
            <person name="Braeken M."/>
            <person name="Weltjens I."/>
            <person name="Voet M."/>
            <person name="Bastiaens I."/>
            <person name="Aert R."/>
            <person name="Defoor E."/>
            <person name="Weitzenegger T."/>
            <person name="Bothe G."/>
            <person name="Ramsperger U."/>
            <person name="Hilbert H."/>
            <person name="Braun M."/>
            <person name="Holzer E."/>
            <person name="Brandt A."/>
            <person name="Peters S."/>
            <person name="van Staveren M."/>
            <person name="Dirkse W."/>
            <person name="Mooijman P."/>
            <person name="Klein Lankhorst R."/>
            <person name="Rose M."/>
            <person name="Hauf J."/>
            <person name="Koetter P."/>
            <person name="Berneiser S."/>
            <person name="Hempel S."/>
            <person name="Feldpausch M."/>
            <person name="Lamberth S."/>
            <person name="Van den Daele H."/>
            <person name="De Keyser A."/>
            <person name="Buysshaert C."/>
            <person name="Gielen J."/>
            <person name="Villarroel R."/>
            <person name="De Clercq R."/>
            <person name="van Montagu M."/>
            <person name="Rogers J."/>
            <person name="Cronin A."/>
            <person name="Quail M.A."/>
            <person name="Bray-Allen S."/>
            <person name="Clark L."/>
            <person name="Doggett J."/>
            <person name="Hall S."/>
            <person name="Kay M."/>
            <person name="Lennard N."/>
            <person name="McLay K."/>
            <person name="Mayes R."/>
            <person name="Pettett A."/>
            <person name="Rajandream M.A."/>
            <person name="Lyne M."/>
            <person name="Benes V."/>
            <person name="Rechmann S."/>
            <person name="Borkova D."/>
            <person name="Bloecker H."/>
            <person name="Scharfe M."/>
            <person name="Grimm M."/>
            <person name="Loehnert T.-H."/>
            <person name="Dose S."/>
            <person name="de Haan M."/>
            <person name="Maarse A.C."/>
            <person name="Schaefer M."/>
            <person name="Mueller-Auer S."/>
            <person name="Gabel C."/>
            <person name="Fuchs M."/>
            <person name="Fartmann B."/>
            <person name="Granderath K."/>
            <person name="Dauner D."/>
            <person name="Herzl A."/>
            <person name="Neumann S."/>
            <person name="Argiriou A."/>
            <person name="Vitale D."/>
            <person name="Liguori R."/>
            <person name="Piravandi E."/>
            <person name="Massenet O."/>
            <person name="Quigley F."/>
            <person name="Clabauld G."/>
            <person name="Muendlein A."/>
            <person name="Felber R."/>
            <person name="Schnabl S."/>
            <person name="Hiller R."/>
            <person name="Schmidt W."/>
            <person name="Lecharny A."/>
            <person name="Aubourg S."/>
            <person name="Chefdor F."/>
            <person name="Cooke R."/>
            <person name="Berger C."/>
            <person name="Monfort A."/>
            <person name="Casacuberta E."/>
            <person name="Gibbons T."/>
            <person name="Weber N."/>
            <person name="Vandenbol M."/>
            <person name="Bargues M."/>
            <person name="Terol J."/>
            <person name="Torres A."/>
            <person name="Perez-Perez A."/>
            <person name="Purnelle B."/>
            <person name="Bent E."/>
            <person name="Johnson S."/>
            <person name="Tacon D."/>
            <person name="Jesse T."/>
            <person name="Heijnen L."/>
            <person name="Schwarz S."/>
            <person name="Scholler P."/>
            <person name="Heber S."/>
            <person name="Francs P."/>
            <person name="Bielke C."/>
            <person name="Frishman D."/>
            <person name="Haase D."/>
            <person name="Lemcke K."/>
            <person name="Mewes H.-W."/>
            <person name="Stocker S."/>
            <person name="Zaccaria P."/>
            <person name="Bevan M."/>
            <person name="Wilson R.K."/>
            <person name="de la Bastide M."/>
            <person name="Habermann K."/>
            <person name="Parnell L."/>
            <person name="Dedhia N."/>
            <person name="Gnoj L."/>
            <person name="Schutz K."/>
            <person name="Huang E."/>
            <person name="Spiegel L."/>
            <person name="Sekhon M."/>
            <person name="Murray J."/>
            <person name="Sheet P."/>
            <person name="Cordes M."/>
            <person name="Abu-Threideh J."/>
            <person name="Stoneking T."/>
            <person name="Kalicki J."/>
            <person name="Graves T."/>
            <person name="Harmon G."/>
            <person name="Edwards J."/>
            <person name="Latreille P."/>
            <person name="Courtney L."/>
            <person name="Cloud J."/>
            <person name="Abbott A."/>
            <person name="Scott K."/>
            <person name="Johnson D."/>
            <person name="Minx P."/>
            <person name="Bentley D."/>
            <person name="Fulton B."/>
            <person name="Miller N."/>
            <person name="Greco T."/>
            <person name="Kemp K."/>
            <person name="Kramer J."/>
            <person name="Fulton L."/>
            <person name="Mardis E."/>
            <person name="Dante M."/>
            <person name="Pepin K."/>
            <person name="Hillier L.W."/>
            <person name="Nelson J."/>
            <person name="Spieth J."/>
            <person name="Ryan E."/>
            <person name="Andrews S."/>
            <person name="Geisel C."/>
            <person name="Layman D."/>
            <person name="Du H."/>
            <person name="Ali J."/>
            <person name="Berghoff A."/>
            <person name="Jones K."/>
            <person name="Drone K."/>
            <person name="Cotton M."/>
            <person name="Joshu C."/>
            <person name="Antonoiu B."/>
            <person name="Zidanic M."/>
            <person name="Strong C."/>
            <person name="Sun H."/>
            <person name="Lamar B."/>
            <person name="Yordan C."/>
            <person name="Ma P."/>
            <person name="Zhong J."/>
            <person name="Preston R."/>
            <person name="Vil D."/>
            <person name="Shekher M."/>
            <person name="Matero A."/>
            <person name="Shah R."/>
            <person name="Swaby I.K."/>
            <person name="O'Shaughnessy A."/>
            <person name="Rodriguez M."/>
            <person name="Hoffman J."/>
            <person name="Till S."/>
            <person name="Granat S."/>
            <person name="Shohdy N."/>
            <person name="Hasegawa A."/>
            <person name="Hameed A."/>
            <person name="Lodhi M."/>
            <person name="Johnson A."/>
            <person name="Chen E."/>
            <person name="Marra M.A."/>
            <person name="Martienssen R."/>
            <person name="McCombie W.R."/>
        </authorList>
    </citation>
    <scope>NUCLEOTIDE SEQUENCE [LARGE SCALE GENOMIC DNA]</scope>
    <source>
        <strain>cv. Columbia</strain>
    </source>
</reference>
<reference key="3">
    <citation type="journal article" date="2017" name="Plant J.">
        <title>Araport11: a complete reannotation of the Arabidopsis thaliana reference genome.</title>
        <authorList>
            <person name="Cheng C.Y."/>
            <person name="Krishnakumar V."/>
            <person name="Chan A.P."/>
            <person name="Thibaud-Nissen F."/>
            <person name="Schobel S."/>
            <person name="Town C.D."/>
        </authorList>
    </citation>
    <scope>GENOME REANNOTATION</scope>
    <source>
        <strain>cv. Columbia</strain>
    </source>
</reference>
<reference key="4">
    <citation type="submission" date="2002-03" db="EMBL/GenBank/DDBJ databases">
        <title>Full-length cDNA from Arabidopsis thaliana.</title>
        <authorList>
            <person name="Brover V.V."/>
            <person name="Troukhan M.E."/>
            <person name="Alexandrov N.A."/>
            <person name="Lu Y.-P."/>
            <person name="Flavell R.B."/>
            <person name="Feldmann K.A."/>
        </authorList>
    </citation>
    <scope>NUCLEOTIDE SEQUENCE [LARGE SCALE MRNA] (ISOFORM 1)</scope>
</reference>
<reference key="5">
    <citation type="submission" date="2006-07" db="EMBL/GenBank/DDBJ databases">
        <title>Large-scale analysis of RIKEN Arabidopsis full-length (RAFL) cDNAs.</title>
        <authorList>
            <person name="Totoki Y."/>
            <person name="Seki M."/>
            <person name="Ishida J."/>
            <person name="Nakajima M."/>
            <person name="Enju A."/>
            <person name="Kamiya A."/>
            <person name="Narusaka M."/>
            <person name="Shin-i T."/>
            <person name="Nakagawa M."/>
            <person name="Sakamoto N."/>
            <person name="Oishi K."/>
            <person name="Kohara Y."/>
            <person name="Kobayashi M."/>
            <person name="Toyoda A."/>
            <person name="Sakaki Y."/>
            <person name="Sakurai T."/>
            <person name="Iida K."/>
            <person name="Akiyama K."/>
            <person name="Satou M."/>
            <person name="Toyoda T."/>
            <person name="Konagaya A."/>
            <person name="Carninci P."/>
            <person name="Kawai J."/>
            <person name="Hayashizaki Y."/>
            <person name="Shinozaki K."/>
        </authorList>
    </citation>
    <scope>NUCLEOTIDE SEQUENCE [LARGE SCALE MRNA] (ISOFORM 2)</scope>
    <source>
        <strain>cv. Columbia</strain>
    </source>
</reference>
<reference key="6">
    <citation type="journal article" date="2004" name="J. Exp. Bot.">
        <title>Characterization of Arabidopsis ZIM, a member of a novel plant-specific GATA factor gene family.</title>
        <authorList>
            <person name="Shikata M."/>
            <person name="Matsuda Y."/>
            <person name="Ando K."/>
            <person name="Nishii A."/>
            <person name="Takemura M."/>
            <person name="Yokota A."/>
            <person name="Kohchi T."/>
        </authorList>
    </citation>
    <scope>FUNCTION</scope>
    <scope>TISSUE SPECIFICITY</scope>
</reference>
<reference key="7">
    <citation type="journal article" date="2004" name="Plant Physiol.">
        <title>The GATA family of transcription factors in Arabidopsis and rice.</title>
        <authorList>
            <person name="Reyes J.C."/>
            <person name="Muro-Pastor M.I."/>
            <person name="Florencio F.J."/>
        </authorList>
    </citation>
    <scope>GENE FAMILY ORGANIZATION</scope>
</reference>
<reference key="8">
    <citation type="journal article" date="2007" name="Trends Plant Sci.">
        <title>The tify family previously known as ZIM.</title>
        <authorList>
            <person name="Vanholme B."/>
            <person name="Grunewald W."/>
            <person name="Bateman A."/>
            <person name="Kohchi T."/>
            <person name="Gheysen G."/>
        </authorList>
    </citation>
    <scope>GENE FAMILY</scope>
    <scope>NOMENCLATURE</scope>
</reference>
<organism>
    <name type="scientific">Arabidopsis thaliana</name>
    <name type="common">Mouse-ear cress</name>
    <dbReference type="NCBI Taxonomy" id="3702"/>
    <lineage>
        <taxon>Eukaryota</taxon>
        <taxon>Viridiplantae</taxon>
        <taxon>Streptophyta</taxon>
        <taxon>Embryophyta</taxon>
        <taxon>Tracheophyta</taxon>
        <taxon>Spermatophyta</taxon>
        <taxon>Magnoliopsida</taxon>
        <taxon>eudicotyledons</taxon>
        <taxon>Gunneridae</taxon>
        <taxon>Pentapetalae</taxon>
        <taxon>rosids</taxon>
        <taxon>malvids</taxon>
        <taxon>Brassicales</taxon>
        <taxon>Brassicaceae</taxon>
        <taxon>Camelineae</taxon>
        <taxon>Arabidopsis</taxon>
    </lineage>
</organism>
<gene>
    <name type="primary">GATA25</name>
    <name type="synonym">TIFY1</name>
    <name type="synonym">ZIM</name>
    <name type="ordered locus">At4g24470</name>
    <name type="ORF">T22A6.300</name>
</gene>
<comment type="function">
    <text evidence="1 7">Transcriptional activator that specifically binds 5'-GATA-3' or 5'-GAT-3' motifs within gene promoters.</text>
</comment>
<comment type="interaction">
    <interactant intactId="EBI-2460434">
        <id>Q9LRH6</id>
    </interactant>
    <interactant intactId="EBI-25517350">
        <id>A0A178UXI0</id>
        <label>AXX17_At4g01020</label>
    </interactant>
    <organismsDiffer>false</organismsDiffer>
    <experiments>3</experiments>
</comment>
<comment type="interaction">
    <interactant intactId="EBI-2460434">
        <id>Q9LRH6</id>
    </interactant>
    <interactant intactId="EBI-4448729">
        <id>Q9ZVC9</id>
        <label>FRS3</label>
    </interactant>
    <organismsDiffer>false</organismsDiffer>
    <experiments>4</experiments>
</comment>
<comment type="interaction">
    <interactant intactId="EBI-2460434">
        <id>Q9LRH6</id>
    </interactant>
    <interactant intactId="EBI-532001">
        <id>Q9SMN1</id>
        <label>GAMMACAL2</label>
    </interactant>
    <organismsDiffer>false</organismsDiffer>
    <experiments>3</experiments>
</comment>
<comment type="interaction">
    <interactant intactId="EBI-2460434">
        <id>Q9LRH6</id>
    </interactant>
    <interactant intactId="EBI-4426127">
        <id>Q8GXL7</id>
        <label>GATA24</label>
    </interactant>
    <organismsDiffer>false</organismsDiffer>
    <experiments>13</experiments>
</comment>
<comment type="interaction">
    <interactant intactId="EBI-2460434">
        <id>Q9LRH6</id>
    </interactant>
    <interactant intactId="EBI-2460434">
        <id>Q9LRH6</id>
        <label>GATA25</label>
    </interactant>
    <organismsDiffer>false</organismsDiffer>
    <experiments>4</experiments>
</comment>
<comment type="interaction">
    <interactant intactId="EBI-2460434">
        <id>Q9LRH6</id>
    </interactant>
    <interactant intactId="EBI-4435064">
        <id>Q8H1G0</id>
        <label>GATA28</label>
    </interactant>
    <organismsDiffer>false</organismsDiffer>
    <experiments>9</experiments>
</comment>
<comment type="interaction">
    <interactant intactId="EBI-2460434">
        <id>Q9LRH6</id>
    </interactant>
    <interactant intactId="EBI-1253508">
        <id>F4JL11</id>
        <label>IMPA2</label>
    </interactant>
    <organismsDiffer>false</organismsDiffer>
    <experiments>3</experiments>
</comment>
<comment type="interaction">
    <interactant intactId="EBI-2460434">
        <id>Q9LRH6</id>
    </interactant>
    <interactant intactId="EBI-2125983">
        <id>Q8LCG7</id>
        <label>NFYC2</label>
    </interactant>
    <organismsDiffer>false</organismsDiffer>
    <experiments>3</experiments>
</comment>
<comment type="interaction">
    <interactant intactId="EBI-2460434">
        <id>Q9LRH6</id>
    </interactant>
    <interactant intactId="EBI-2466018">
        <id>Q9FMV5</id>
        <label>NFYC4</label>
    </interactant>
    <organismsDiffer>false</organismsDiffer>
    <experiments>3</experiments>
</comment>
<comment type="interaction">
    <interactant intactId="EBI-2460434">
        <id>Q9LRH6</id>
    </interactant>
    <interactant intactId="EBI-7890317">
        <id>Q84JF5</id>
        <label>PTAC14</label>
    </interactant>
    <organismsDiffer>false</organismsDiffer>
    <experiments>3</experiments>
</comment>
<comment type="interaction">
    <interactant intactId="EBI-2460434">
        <id>Q9LRH6</id>
    </interactant>
    <interactant intactId="EBI-25522447">
        <id>Q9MAH8</id>
        <label>TCP3</label>
    </interactant>
    <organismsDiffer>false</organismsDiffer>
    <experiments>3</experiments>
</comment>
<comment type="interaction">
    <interactant intactId="EBI-2460434">
        <id>Q9LRH6</id>
    </interactant>
    <interactant intactId="EBI-4452426">
        <id>Q9FEE2</id>
        <label>TON2</label>
    </interactant>
    <organismsDiffer>false</organismsDiffer>
    <experiments>3</experiments>
</comment>
<comment type="subcellular location">
    <subcellularLocation>
        <location evidence="3 6">Nucleus</location>
    </subcellularLocation>
</comment>
<comment type="alternative products">
    <event type="alternative splicing"/>
    <isoform>
        <id>Q9LRH6-1</id>
        <name>1</name>
        <sequence type="displayed"/>
    </isoform>
    <isoform>
        <id>Q9LRH6-2</id>
        <name>2</name>
        <sequence type="described" ref="VSP_027849 VSP_027850"/>
    </isoform>
</comment>
<comment type="tissue specificity">
    <text evidence="6 7">Predominantly expressed in shoot apices, inflorescences and roots.</text>
</comment>
<comment type="miscellaneous">
    <molecule>Isoform 2</molecule>
    <text evidence="9">May be due to intron retention.</text>
</comment>
<comment type="similarity">
    <text evidence="9">Belongs to the type IV zinc-finger family. Class C subfamily.</text>
</comment>
<accession>Q9LRH6</accession>
<accession>Q0WNU9</accession>
<accession>Q9STU8</accession>
<name>GAT25_ARATH</name>
<keyword id="KW-0010">Activator</keyword>
<keyword id="KW-0025">Alternative splicing</keyword>
<keyword id="KW-0238">DNA-binding</keyword>
<keyword id="KW-0479">Metal-binding</keyword>
<keyword id="KW-0539">Nucleus</keyword>
<keyword id="KW-1185">Reference proteome</keyword>
<keyword id="KW-0804">Transcription</keyword>
<keyword id="KW-0805">Transcription regulation</keyword>
<keyword id="KW-0862">Zinc</keyword>
<keyword id="KW-0863">Zinc-finger</keyword>
<feature type="chain" id="PRO_0000083455" description="GATA transcription factor 25">
    <location>
        <begin position="1"/>
        <end position="309"/>
    </location>
</feature>
<feature type="domain" description="Tify" evidence="4">
    <location>
        <begin position="77"/>
        <end position="112"/>
    </location>
</feature>
<feature type="domain" description="CCT" evidence="3">
    <location>
        <begin position="146"/>
        <end position="188"/>
    </location>
</feature>
<feature type="zinc finger region" description="GATA-type" evidence="2">
    <location>
        <begin position="208"/>
        <end position="267"/>
    </location>
</feature>
<feature type="region of interest" description="Disordered" evidence="5">
    <location>
        <begin position="1"/>
        <end position="35"/>
    </location>
</feature>
<feature type="region of interest" description="Disordered" evidence="5">
    <location>
        <begin position="187"/>
        <end position="207"/>
    </location>
</feature>
<feature type="region of interest" description="Disordered" evidence="5">
    <location>
        <begin position="290"/>
        <end position="309"/>
    </location>
</feature>
<feature type="compositionally biased region" description="Polar residues" evidence="5">
    <location>
        <begin position="8"/>
        <end position="18"/>
    </location>
</feature>
<feature type="compositionally biased region" description="Polar residues" evidence="5">
    <location>
        <begin position="187"/>
        <end position="202"/>
    </location>
</feature>
<feature type="compositionally biased region" description="Polar residues" evidence="5">
    <location>
        <begin position="293"/>
        <end position="309"/>
    </location>
</feature>
<feature type="splice variant" id="VSP_027849" description="In isoform 2." evidence="8">
    <original>MARNK</original>
    <variation>SVCQS</variation>
    <location>
        <begin position="178"/>
        <end position="182"/>
    </location>
</feature>
<feature type="splice variant" id="VSP_027850" description="In isoform 2." evidence="8">
    <location>
        <begin position="183"/>
        <end position="309"/>
    </location>
</feature>
<feature type="sequence conflict" description="In Ref. 1; BAA97678." evidence="9" ref="1">
    <original>L</original>
    <variation>M</variation>
    <location>
        <position position="305"/>
    </location>
</feature>
<dbReference type="EMBL" id="AB035310">
    <property type="protein sequence ID" value="BAA97678.1"/>
    <property type="molecule type" value="mRNA"/>
</dbReference>
<dbReference type="EMBL" id="AB035311">
    <property type="protein sequence ID" value="BAA97679.1"/>
    <property type="molecule type" value="Genomic_DNA"/>
</dbReference>
<dbReference type="EMBL" id="AL078637">
    <property type="protein sequence ID" value="CAB45082.1"/>
    <property type="molecule type" value="Genomic_DNA"/>
</dbReference>
<dbReference type="EMBL" id="AL161561">
    <property type="protein sequence ID" value="CAB79357.1"/>
    <property type="molecule type" value="Genomic_DNA"/>
</dbReference>
<dbReference type="EMBL" id="CP002687">
    <property type="protein sequence ID" value="AEE84909.1"/>
    <property type="molecule type" value="Genomic_DNA"/>
</dbReference>
<dbReference type="EMBL" id="CP002687">
    <property type="protein sequence ID" value="AEE84910.1"/>
    <property type="molecule type" value="Genomic_DNA"/>
</dbReference>
<dbReference type="EMBL" id="AY086038">
    <property type="protein sequence ID" value="AAM63248.1"/>
    <property type="molecule type" value="mRNA"/>
</dbReference>
<dbReference type="EMBL" id="AK229337">
    <property type="protein sequence ID" value="BAF01200.1"/>
    <property type="molecule type" value="mRNA"/>
</dbReference>
<dbReference type="PIR" id="JC7336">
    <property type="entry name" value="JC7336"/>
</dbReference>
<dbReference type="PIR" id="T09910">
    <property type="entry name" value="T09910"/>
</dbReference>
<dbReference type="RefSeq" id="NP_194178.1">
    <molecule id="Q9LRH6-1"/>
    <property type="nucleotide sequence ID" value="NM_118580.4"/>
</dbReference>
<dbReference type="RefSeq" id="NP_849435.1">
    <molecule id="Q9LRH6-1"/>
    <property type="nucleotide sequence ID" value="NM_179104.3"/>
</dbReference>
<dbReference type="SMR" id="Q9LRH6"/>
<dbReference type="BioGRID" id="13838">
    <property type="interactions" value="19"/>
</dbReference>
<dbReference type="FunCoup" id="Q9LRH6">
    <property type="interactions" value="527"/>
</dbReference>
<dbReference type="IntAct" id="Q9LRH6">
    <property type="interactions" value="18"/>
</dbReference>
<dbReference type="STRING" id="3702.Q9LRH6"/>
<dbReference type="PaxDb" id="3702-AT4G24470.3"/>
<dbReference type="ProteomicsDB" id="228963">
    <molecule id="Q9LRH6-1"/>
</dbReference>
<dbReference type="EnsemblPlants" id="AT4G24470.1">
    <molecule id="Q9LRH6-1"/>
    <property type="protein sequence ID" value="AT4G24470.1"/>
    <property type="gene ID" value="AT4G24470"/>
</dbReference>
<dbReference type="EnsemblPlants" id="AT4G24470.2">
    <molecule id="Q9LRH6-1"/>
    <property type="protein sequence ID" value="AT4G24470.2"/>
    <property type="gene ID" value="AT4G24470"/>
</dbReference>
<dbReference type="GeneID" id="828549"/>
<dbReference type="Gramene" id="AT4G24470.1">
    <molecule id="Q9LRH6-1"/>
    <property type="protein sequence ID" value="AT4G24470.1"/>
    <property type="gene ID" value="AT4G24470"/>
</dbReference>
<dbReference type="Gramene" id="AT4G24470.2">
    <molecule id="Q9LRH6-1"/>
    <property type="protein sequence ID" value="AT4G24470.2"/>
    <property type="gene ID" value="AT4G24470"/>
</dbReference>
<dbReference type="KEGG" id="ath:AT4G24470"/>
<dbReference type="Araport" id="AT4G24470"/>
<dbReference type="TAIR" id="AT4G24470">
    <property type="gene designation" value="ZIM"/>
</dbReference>
<dbReference type="eggNOG" id="KOG1601">
    <property type="taxonomic scope" value="Eukaryota"/>
</dbReference>
<dbReference type="InParanoid" id="Q9LRH6"/>
<dbReference type="OMA" id="PMEGANQ"/>
<dbReference type="OrthoDB" id="2162994at2759"/>
<dbReference type="PhylomeDB" id="Q9LRH6"/>
<dbReference type="PRO" id="PR:Q9LRH6"/>
<dbReference type="Proteomes" id="UP000006548">
    <property type="component" value="Chromosome 4"/>
</dbReference>
<dbReference type="ExpressionAtlas" id="Q9LRH6">
    <property type="expression patterns" value="baseline and differential"/>
</dbReference>
<dbReference type="GO" id="GO:0005634">
    <property type="term" value="C:nucleus"/>
    <property type="evidence" value="ECO:0007669"/>
    <property type="project" value="UniProtKB-SubCell"/>
</dbReference>
<dbReference type="GO" id="GO:0042802">
    <property type="term" value="F:identical protein binding"/>
    <property type="evidence" value="ECO:0000353"/>
    <property type="project" value="IntAct"/>
</dbReference>
<dbReference type="GO" id="GO:0043565">
    <property type="term" value="F:sequence-specific DNA binding"/>
    <property type="evidence" value="ECO:0007669"/>
    <property type="project" value="InterPro"/>
</dbReference>
<dbReference type="GO" id="GO:0008270">
    <property type="term" value="F:zinc ion binding"/>
    <property type="evidence" value="ECO:0007669"/>
    <property type="project" value="UniProtKB-KW"/>
</dbReference>
<dbReference type="GO" id="GO:0006355">
    <property type="term" value="P:regulation of DNA-templated transcription"/>
    <property type="evidence" value="ECO:0007669"/>
    <property type="project" value="InterPro"/>
</dbReference>
<dbReference type="CDD" id="cd00202">
    <property type="entry name" value="ZnF_GATA"/>
    <property type="match status" value="1"/>
</dbReference>
<dbReference type="Gene3D" id="3.30.50.10">
    <property type="entry name" value="Erythroid Transcription Factor GATA-1, subunit A"/>
    <property type="match status" value="1"/>
</dbReference>
<dbReference type="InterPro" id="IPR010402">
    <property type="entry name" value="CCT_domain"/>
</dbReference>
<dbReference type="InterPro" id="IPR045280">
    <property type="entry name" value="TIFY-like"/>
</dbReference>
<dbReference type="InterPro" id="IPR010399">
    <property type="entry name" value="Tify_dom"/>
</dbReference>
<dbReference type="InterPro" id="IPR000679">
    <property type="entry name" value="Znf_GATA"/>
</dbReference>
<dbReference type="InterPro" id="IPR013088">
    <property type="entry name" value="Znf_NHR/GATA"/>
</dbReference>
<dbReference type="PANTHER" id="PTHR46125:SF20">
    <property type="entry name" value="GATA TRANSCRIPTION FACTOR 25"/>
    <property type="match status" value="1"/>
</dbReference>
<dbReference type="PANTHER" id="PTHR46125">
    <property type="entry name" value="GATA TRANSCRIPTION FACTOR 28"/>
    <property type="match status" value="1"/>
</dbReference>
<dbReference type="Pfam" id="PF06203">
    <property type="entry name" value="CCT"/>
    <property type="match status" value="1"/>
</dbReference>
<dbReference type="Pfam" id="PF00320">
    <property type="entry name" value="GATA"/>
    <property type="match status" value="1"/>
</dbReference>
<dbReference type="Pfam" id="PF06200">
    <property type="entry name" value="tify"/>
    <property type="match status" value="1"/>
</dbReference>
<dbReference type="SMART" id="SM00979">
    <property type="entry name" value="TIFY"/>
    <property type="match status" value="1"/>
</dbReference>
<dbReference type="SMART" id="SM00401">
    <property type="entry name" value="ZnF_GATA"/>
    <property type="match status" value="1"/>
</dbReference>
<dbReference type="SUPFAM" id="SSF57716">
    <property type="entry name" value="Glucocorticoid receptor-like (DNA-binding domain)"/>
    <property type="match status" value="1"/>
</dbReference>
<dbReference type="PROSITE" id="PS51017">
    <property type="entry name" value="CCT"/>
    <property type="match status" value="1"/>
</dbReference>
<dbReference type="PROSITE" id="PS00344">
    <property type="entry name" value="GATA_ZN_FINGER_1"/>
    <property type="match status" value="1"/>
</dbReference>
<dbReference type="PROSITE" id="PS50114">
    <property type="entry name" value="GATA_ZN_FINGER_2"/>
    <property type="match status" value="1"/>
</dbReference>
<dbReference type="PROSITE" id="PS51320">
    <property type="entry name" value="TIFY"/>
    <property type="match status" value="1"/>
</dbReference>
<sequence>MFGRHSIIPNNQIGTASASAGEDHVSASATSGHIPYDDMEEIPHPDSIYGAASDLIPDGSQLVAHRSDGSELLVSRPPEGANQLTISFRGQVYVFDAVGADKVDAVLSLLGGSTELAPGPQVMELAQQQNHMPVVEYQSRCSLPQRAQSLDRFRKKRNARCFEKKVRYGVRQEVALRMARNKGQFTSSKMTDGAYNSGTDQDSAQDDAHPEISCTHCGISSKCTPMMRRGPSGPRTLCNACGLFWANRGTLRDLSKKTEENQLALMKPDDGGSVADAANNLNTEAASVEEHTSMVSLANGDNSNLLGDH</sequence>
<protein>
    <recommendedName>
        <fullName>GATA transcription factor 25</fullName>
    </recommendedName>
    <alternativeName>
        <fullName>Protein TIFY 1</fullName>
    </alternativeName>
    <alternativeName>
        <fullName>Protein ZIM</fullName>
    </alternativeName>
</protein>